<keyword id="KW-0003">3Fe-4S</keyword>
<keyword id="KW-0004">4Fe-4S</keyword>
<keyword id="KW-0249">Electron transport</keyword>
<keyword id="KW-0408">Iron</keyword>
<keyword id="KW-0411">Iron-sulfur</keyword>
<keyword id="KW-0479">Metal-binding</keyword>
<keyword id="KW-1185">Reference proteome</keyword>
<keyword id="KW-0677">Repeat</keyword>
<keyword id="KW-0813">Transport</keyword>
<name>FER_RICPR</name>
<feature type="initiator methionine" description="Removed" evidence="1">
    <location>
        <position position="1"/>
    </location>
</feature>
<feature type="chain" id="PRO_0000159102" description="Ferredoxin">
    <location>
        <begin position="2"/>
        <end position="109"/>
    </location>
</feature>
<feature type="domain" description="4Fe-4S ferredoxin-type 1" evidence="2">
    <location>
        <begin position="2"/>
        <end position="30"/>
    </location>
</feature>
<feature type="domain" description="4Fe-4S ferredoxin-type 2" evidence="2">
    <location>
        <begin position="31"/>
        <end position="60"/>
    </location>
</feature>
<feature type="binding site" evidence="1">
    <location>
        <position position="9"/>
    </location>
    <ligand>
        <name>[3Fe-4S] cluster</name>
        <dbReference type="ChEBI" id="CHEBI:21137"/>
    </ligand>
</feature>
<feature type="binding site" evidence="1">
    <location>
        <position position="17"/>
    </location>
    <ligand>
        <name>[3Fe-4S] cluster</name>
        <dbReference type="ChEBI" id="CHEBI:21137"/>
    </ligand>
</feature>
<feature type="binding site" evidence="1">
    <location>
        <position position="21"/>
    </location>
    <ligand>
        <name>[4Fe-4S] cluster</name>
        <dbReference type="ChEBI" id="CHEBI:49883"/>
    </ligand>
</feature>
<feature type="binding site" evidence="1">
    <location>
        <position position="40"/>
    </location>
    <ligand>
        <name>[4Fe-4S] cluster</name>
        <dbReference type="ChEBI" id="CHEBI:49883"/>
    </ligand>
</feature>
<feature type="binding site" evidence="1">
    <location>
        <position position="43"/>
    </location>
    <ligand>
        <name>[4Fe-4S] cluster</name>
        <dbReference type="ChEBI" id="CHEBI:49883"/>
    </ligand>
</feature>
<feature type="binding site" evidence="1">
    <location>
        <position position="46"/>
    </location>
    <ligand>
        <name>[4Fe-4S] cluster</name>
        <dbReference type="ChEBI" id="CHEBI:49883"/>
    </ligand>
</feature>
<feature type="binding site" evidence="1">
    <location>
        <position position="50"/>
    </location>
    <ligand>
        <name>[3Fe-4S] cluster</name>
        <dbReference type="ChEBI" id="CHEBI:21137"/>
    </ligand>
</feature>
<reference key="1">
    <citation type="journal article" date="1998" name="Nature">
        <title>The genome sequence of Rickettsia prowazekii and the origin of mitochondria.</title>
        <authorList>
            <person name="Andersson S.G.E."/>
            <person name="Zomorodipour A."/>
            <person name="Andersson J.O."/>
            <person name="Sicheritz-Ponten T."/>
            <person name="Alsmark U.C.M."/>
            <person name="Podowski R.M."/>
            <person name="Naeslund A.K."/>
            <person name="Eriksson A.-S."/>
            <person name="Winkler H.H."/>
            <person name="Kurland C.G."/>
        </authorList>
    </citation>
    <scope>NUCLEOTIDE SEQUENCE [LARGE SCALE GENOMIC DNA]</scope>
    <source>
        <strain>Madrid E</strain>
    </source>
</reference>
<accession>Q9ZCC8</accession>
<sequence length="109" mass="12566">MTYVVTDECVKCKYTDCVEVCPVDCFYEGEFMLVINPDECIDCGVCVPDCPIDAIKPESPELIEWVERAKDFIENHGWKNITKKKCALPGADKFKDEKDKFNKYIIKKT</sequence>
<organism>
    <name type="scientific">Rickettsia prowazekii (strain Madrid E)</name>
    <dbReference type="NCBI Taxonomy" id="272947"/>
    <lineage>
        <taxon>Bacteria</taxon>
        <taxon>Pseudomonadati</taxon>
        <taxon>Pseudomonadota</taxon>
        <taxon>Alphaproteobacteria</taxon>
        <taxon>Rickettsiales</taxon>
        <taxon>Rickettsiaceae</taxon>
        <taxon>Rickettsieae</taxon>
        <taxon>Rickettsia</taxon>
        <taxon>typhus group</taxon>
    </lineage>
</organism>
<evidence type="ECO:0000250" key="1"/>
<evidence type="ECO:0000255" key="2">
    <source>
        <dbReference type="PROSITE-ProRule" id="PRU00711"/>
    </source>
</evidence>
<dbReference type="EMBL" id="AJ235273">
    <property type="protein sequence ID" value="CAA15254.1"/>
    <property type="molecule type" value="Genomic_DNA"/>
</dbReference>
<dbReference type="PIR" id="F71644">
    <property type="entry name" value="F71644"/>
</dbReference>
<dbReference type="RefSeq" id="NP_221178.1">
    <property type="nucleotide sequence ID" value="NC_000963.1"/>
</dbReference>
<dbReference type="RefSeq" id="WP_010886381.1">
    <property type="nucleotide sequence ID" value="NC_000963.1"/>
</dbReference>
<dbReference type="SMR" id="Q9ZCC8"/>
<dbReference type="STRING" id="272947.gene:17555898"/>
<dbReference type="EnsemblBacteria" id="CAA15254">
    <property type="protein sequence ID" value="CAA15254"/>
    <property type="gene ID" value="CAA15254"/>
</dbReference>
<dbReference type="GeneID" id="57569952"/>
<dbReference type="KEGG" id="rpr:RP829"/>
<dbReference type="PATRIC" id="fig|272947.5.peg.866"/>
<dbReference type="eggNOG" id="COG1146">
    <property type="taxonomic scope" value="Bacteria"/>
</dbReference>
<dbReference type="HOGENOM" id="CLU_139698_0_0_5"/>
<dbReference type="OrthoDB" id="9803397at2"/>
<dbReference type="Proteomes" id="UP000002480">
    <property type="component" value="Chromosome"/>
</dbReference>
<dbReference type="GO" id="GO:0051538">
    <property type="term" value="F:3 iron, 4 sulfur cluster binding"/>
    <property type="evidence" value="ECO:0007669"/>
    <property type="project" value="UniProtKB-KW"/>
</dbReference>
<dbReference type="GO" id="GO:0051539">
    <property type="term" value="F:4 iron, 4 sulfur cluster binding"/>
    <property type="evidence" value="ECO:0007669"/>
    <property type="project" value="UniProtKB-KW"/>
</dbReference>
<dbReference type="GO" id="GO:0009055">
    <property type="term" value="F:electron transfer activity"/>
    <property type="evidence" value="ECO:0007669"/>
    <property type="project" value="InterPro"/>
</dbReference>
<dbReference type="GO" id="GO:0046872">
    <property type="term" value="F:metal ion binding"/>
    <property type="evidence" value="ECO:0007669"/>
    <property type="project" value="UniProtKB-KW"/>
</dbReference>
<dbReference type="Gene3D" id="3.30.70.20">
    <property type="match status" value="1"/>
</dbReference>
<dbReference type="InterPro" id="IPR017896">
    <property type="entry name" value="4Fe4S_Fe-S-bd"/>
</dbReference>
<dbReference type="InterPro" id="IPR017900">
    <property type="entry name" value="4Fe4S_Fe_S_CS"/>
</dbReference>
<dbReference type="InterPro" id="IPR000813">
    <property type="entry name" value="7Fe_ferredoxin"/>
</dbReference>
<dbReference type="InterPro" id="IPR022569">
    <property type="entry name" value="Fd_C"/>
</dbReference>
<dbReference type="InterPro" id="IPR054829">
    <property type="entry name" value="FdxA"/>
</dbReference>
<dbReference type="InterPro" id="IPR050294">
    <property type="entry name" value="RnfB_subfamily"/>
</dbReference>
<dbReference type="NCBIfam" id="NF045490">
    <property type="entry name" value="FdxA_Protbact"/>
    <property type="match status" value="1"/>
</dbReference>
<dbReference type="PANTHER" id="PTHR42859:SF2">
    <property type="entry name" value="FERREDOXIN"/>
    <property type="match status" value="1"/>
</dbReference>
<dbReference type="PANTHER" id="PTHR42859">
    <property type="entry name" value="OXIDOREDUCTASE"/>
    <property type="match status" value="1"/>
</dbReference>
<dbReference type="Pfam" id="PF11953">
    <property type="entry name" value="DUF3470"/>
    <property type="match status" value="1"/>
</dbReference>
<dbReference type="Pfam" id="PF00037">
    <property type="entry name" value="Fer4"/>
    <property type="match status" value="1"/>
</dbReference>
<dbReference type="PRINTS" id="PR00354">
    <property type="entry name" value="7FE8SFRDOXIN"/>
</dbReference>
<dbReference type="SUPFAM" id="SSF54862">
    <property type="entry name" value="4Fe-4S ferredoxins"/>
    <property type="match status" value="1"/>
</dbReference>
<dbReference type="PROSITE" id="PS00198">
    <property type="entry name" value="4FE4S_FER_1"/>
    <property type="match status" value="1"/>
</dbReference>
<dbReference type="PROSITE" id="PS51379">
    <property type="entry name" value="4FE4S_FER_2"/>
    <property type="match status" value="2"/>
</dbReference>
<proteinExistence type="inferred from homology"/>
<protein>
    <recommendedName>
        <fullName>Ferredoxin</fullName>
    </recommendedName>
</protein>
<gene>
    <name type="primary">fdxA</name>
    <name type="ordered locus">RP829</name>
</gene>
<comment type="function">
    <text evidence="1">Ferredoxins are iron-sulfur proteins that transfer electrons in a wide variety of metabolic reactions.</text>
</comment>
<comment type="cofactor">
    <cofactor evidence="1">
        <name>[4Fe-4S] cluster</name>
        <dbReference type="ChEBI" id="CHEBI:49883"/>
    </cofactor>
    <text evidence="1">Binds 1 [4Fe-4S] cluster.</text>
</comment>
<comment type="cofactor">
    <cofactor evidence="1">
        <name>[3Fe-4S] cluster</name>
        <dbReference type="ChEBI" id="CHEBI:21137"/>
    </cofactor>
    <text evidence="1">Binds 1 [3Fe-4S] cluster.</text>
</comment>